<sequence length="379" mass="41720">MPTAFPPDSVGLVTPQIAHFSEPLALACGRALPAYDLIYETYGQLNASASNAVLICHALSGHHHAAGYHSVDDRKPGWWDSCIGPGKPIDTNRFFVVSLNNLGGCNGSTGPSSLNPDTGKPFGADFPVLTVEDWVHSQARLADRLGISQWAAVIGGSLGGMQALQWTITYPDRVRHCLAIASAPKLSAQNIAFNEVARQAILTDPEFHGGSFQEQGVIPKRGLMLARMVGHITYLSDDSMGEKFGRGLKSEKLNYDFHSVEFQVESYLRYQGEEFSGRFDANTYLLMTKALDYFDPAANCDDDLAKTFAHATAKFCVMSFTTDWRFSPARSRELVDALMAARKDVCYLEIDAPQGHDAFLIPIPRYLQAFSHYMNRITL</sequence>
<proteinExistence type="inferred from homology"/>
<feature type="chain" id="PRO_0000231880" description="Homoserine O-succinyltransferase">
    <location>
        <begin position="1"/>
        <end position="379"/>
    </location>
</feature>
<feature type="domain" description="AB hydrolase-1" evidence="1">
    <location>
        <begin position="51"/>
        <end position="360"/>
    </location>
</feature>
<feature type="active site" description="Nucleophile" evidence="1">
    <location>
        <position position="157"/>
    </location>
</feature>
<feature type="active site" evidence="1">
    <location>
        <position position="323"/>
    </location>
</feature>
<feature type="active site" evidence="1">
    <location>
        <position position="356"/>
    </location>
</feature>
<feature type="binding site" evidence="1">
    <location>
        <position position="227"/>
    </location>
    <ligand>
        <name>substrate</name>
    </ligand>
</feature>
<feature type="binding site" evidence="1">
    <location>
        <position position="357"/>
    </location>
    <ligand>
        <name>substrate</name>
    </ligand>
</feature>
<feature type="site" description="Important for acyl-CoA specificity" evidence="1">
    <location>
        <position position="325"/>
    </location>
</feature>
<dbReference type="EC" id="2.3.1.46" evidence="1"/>
<dbReference type="EMBL" id="CP000076">
    <property type="protein sequence ID" value="AAY95032.1"/>
    <property type="molecule type" value="Genomic_DNA"/>
</dbReference>
<dbReference type="RefSeq" id="WP_011064016.1">
    <property type="nucleotide sequence ID" value="NC_004129.6"/>
</dbReference>
<dbReference type="SMR" id="Q4K4D3"/>
<dbReference type="STRING" id="220664.PFL_5842"/>
<dbReference type="ESTHER" id="psef5-metx">
    <property type="family name" value="Homoserine_transacetylase"/>
</dbReference>
<dbReference type="KEGG" id="pfl:PFL_5842"/>
<dbReference type="PATRIC" id="fig|220664.5.peg.5956"/>
<dbReference type="eggNOG" id="COG2021">
    <property type="taxonomic scope" value="Bacteria"/>
</dbReference>
<dbReference type="HOGENOM" id="CLU_028760_1_2_6"/>
<dbReference type="UniPathway" id="UPA00051">
    <property type="reaction ID" value="UER00075"/>
</dbReference>
<dbReference type="Proteomes" id="UP000008540">
    <property type="component" value="Chromosome"/>
</dbReference>
<dbReference type="GO" id="GO:0005737">
    <property type="term" value="C:cytoplasm"/>
    <property type="evidence" value="ECO:0007669"/>
    <property type="project" value="UniProtKB-SubCell"/>
</dbReference>
<dbReference type="GO" id="GO:0004414">
    <property type="term" value="F:homoserine O-acetyltransferase activity"/>
    <property type="evidence" value="ECO:0007669"/>
    <property type="project" value="TreeGrafter"/>
</dbReference>
<dbReference type="GO" id="GO:0008899">
    <property type="term" value="F:homoserine O-succinyltransferase activity"/>
    <property type="evidence" value="ECO:0007669"/>
    <property type="project" value="UniProtKB-UniRule"/>
</dbReference>
<dbReference type="GO" id="GO:0009092">
    <property type="term" value="P:homoserine metabolic process"/>
    <property type="evidence" value="ECO:0007669"/>
    <property type="project" value="TreeGrafter"/>
</dbReference>
<dbReference type="GO" id="GO:0009086">
    <property type="term" value="P:methionine biosynthetic process"/>
    <property type="evidence" value="ECO:0007669"/>
    <property type="project" value="UniProtKB-UniRule"/>
</dbReference>
<dbReference type="FunFam" id="1.10.1740.110:FF:000001">
    <property type="entry name" value="Homoserine O-acetyltransferase"/>
    <property type="match status" value="1"/>
</dbReference>
<dbReference type="Gene3D" id="1.10.1740.110">
    <property type="match status" value="1"/>
</dbReference>
<dbReference type="Gene3D" id="3.40.50.1820">
    <property type="entry name" value="alpha/beta hydrolase"/>
    <property type="match status" value="1"/>
</dbReference>
<dbReference type="HAMAP" id="MF_00296">
    <property type="entry name" value="MetX_acyltransf"/>
    <property type="match status" value="1"/>
</dbReference>
<dbReference type="InterPro" id="IPR000073">
    <property type="entry name" value="AB_hydrolase_1"/>
</dbReference>
<dbReference type="InterPro" id="IPR029058">
    <property type="entry name" value="AB_hydrolase_fold"/>
</dbReference>
<dbReference type="InterPro" id="IPR008220">
    <property type="entry name" value="HAT_MetX-like"/>
</dbReference>
<dbReference type="NCBIfam" id="TIGR01392">
    <property type="entry name" value="homoserO_Ac_trn"/>
    <property type="match status" value="1"/>
</dbReference>
<dbReference type="NCBIfam" id="NF001209">
    <property type="entry name" value="PRK00175.1"/>
    <property type="match status" value="1"/>
</dbReference>
<dbReference type="PANTHER" id="PTHR32268">
    <property type="entry name" value="HOMOSERINE O-ACETYLTRANSFERASE"/>
    <property type="match status" value="1"/>
</dbReference>
<dbReference type="PANTHER" id="PTHR32268:SF11">
    <property type="entry name" value="HOMOSERINE O-ACETYLTRANSFERASE"/>
    <property type="match status" value="1"/>
</dbReference>
<dbReference type="Pfam" id="PF00561">
    <property type="entry name" value="Abhydrolase_1"/>
    <property type="match status" value="1"/>
</dbReference>
<dbReference type="PIRSF" id="PIRSF000443">
    <property type="entry name" value="Homoser_Ac_trans"/>
    <property type="match status" value="1"/>
</dbReference>
<dbReference type="SUPFAM" id="SSF53474">
    <property type="entry name" value="alpha/beta-Hydrolases"/>
    <property type="match status" value="1"/>
</dbReference>
<name>METXS_PSEF5</name>
<evidence type="ECO:0000255" key="1">
    <source>
        <dbReference type="HAMAP-Rule" id="MF_00296"/>
    </source>
</evidence>
<protein>
    <recommendedName>
        <fullName evidence="1">Homoserine O-succinyltransferase</fullName>
        <shortName evidence="1">HST</shortName>
        <ecNumber evidence="1">2.3.1.46</ecNumber>
    </recommendedName>
    <alternativeName>
        <fullName evidence="1">Homoserine transsuccinylase</fullName>
        <shortName evidence="1">HTS</shortName>
    </alternativeName>
</protein>
<gene>
    <name evidence="1" type="primary">metXS</name>
    <name type="ordered locus">PFL_5842</name>
</gene>
<reference key="1">
    <citation type="journal article" date="2005" name="Nat. Biotechnol.">
        <title>Complete genome sequence of the plant commensal Pseudomonas fluorescens Pf-5.</title>
        <authorList>
            <person name="Paulsen I.T."/>
            <person name="Press C.M."/>
            <person name="Ravel J."/>
            <person name="Kobayashi D.Y."/>
            <person name="Myers G.S.A."/>
            <person name="Mavrodi D.V."/>
            <person name="DeBoy R.T."/>
            <person name="Seshadri R."/>
            <person name="Ren Q."/>
            <person name="Madupu R."/>
            <person name="Dodson R.J."/>
            <person name="Durkin A.S."/>
            <person name="Brinkac L.M."/>
            <person name="Daugherty S.C."/>
            <person name="Sullivan S.A."/>
            <person name="Rosovitz M.J."/>
            <person name="Gwinn M.L."/>
            <person name="Zhou L."/>
            <person name="Schneider D.J."/>
            <person name="Cartinhour S.W."/>
            <person name="Nelson W.C."/>
            <person name="Weidman J."/>
            <person name="Watkins K."/>
            <person name="Tran K."/>
            <person name="Khouri H."/>
            <person name="Pierson E.A."/>
            <person name="Pierson L.S. III"/>
            <person name="Thomashow L.S."/>
            <person name="Loper J.E."/>
        </authorList>
    </citation>
    <scope>NUCLEOTIDE SEQUENCE [LARGE SCALE GENOMIC DNA]</scope>
    <source>
        <strain>ATCC BAA-477 / NRRL B-23932 / Pf-5</strain>
    </source>
</reference>
<comment type="function">
    <text evidence="1">Transfers a succinyl group from succinyl-CoA to L-homoserine, forming succinyl-L-homoserine.</text>
</comment>
<comment type="catalytic activity">
    <reaction evidence="1">
        <text>L-homoserine + succinyl-CoA = O-succinyl-L-homoserine + CoA</text>
        <dbReference type="Rhea" id="RHEA:22008"/>
        <dbReference type="ChEBI" id="CHEBI:57287"/>
        <dbReference type="ChEBI" id="CHEBI:57292"/>
        <dbReference type="ChEBI" id="CHEBI:57476"/>
        <dbReference type="ChEBI" id="CHEBI:57661"/>
        <dbReference type="EC" id="2.3.1.46"/>
    </reaction>
</comment>
<comment type="pathway">
    <text evidence="1">Amino-acid biosynthesis; L-methionine biosynthesis via de novo pathway; O-succinyl-L-homoserine from L-homoserine: step 1/1.</text>
</comment>
<comment type="subunit">
    <text evidence="1">Homodimer.</text>
</comment>
<comment type="subcellular location">
    <subcellularLocation>
        <location evidence="1">Cytoplasm</location>
    </subcellularLocation>
</comment>
<comment type="similarity">
    <text evidence="1">Belongs to the AB hydrolase superfamily. MetX family.</text>
</comment>
<organism>
    <name type="scientific">Pseudomonas fluorescens (strain ATCC BAA-477 / NRRL B-23932 / Pf-5)</name>
    <dbReference type="NCBI Taxonomy" id="220664"/>
    <lineage>
        <taxon>Bacteria</taxon>
        <taxon>Pseudomonadati</taxon>
        <taxon>Pseudomonadota</taxon>
        <taxon>Gammaproteobacteria</taxon>
        <taxon>Pseudomonadales</taxon>
        <taxon>Pseudomonadaceae</taxon>
        <taxon>Pseudomonas</taxon>
    </lineage>
</organism>
<keyword id="KW-0012">Acyltransferase</keyword>
<keyword id="KW-0028">Amino-acid biosynthesis</keyword>
<keyword id="KW-0963">Cytoplasm</keyword>
<keyword id="KW-0486">Methionine biosynthesis</keyword>
<keyword id="KW-0808">Transferase</keyword>
<accession>Q4K4D3</accession>